<protein>
    <recommendedName>
        <fullName evidence="1">Methionine--tRNA ligase</fullName>
        <ecNumber evidence="1">6.1.1.10</ecNumber>
    </recommendedName>
    <alternativeName>
        <fullName evidence="1">Methionyl-tRNA synthetase</fullName>
        <shortName evidence="1">MetRS</shortName>
    </alternativeName>
</protein>
<proteinExistence type="inferred from homology"/>
<gene>
    <name evidence="1" type="primary">metG</name>
    <name type="ordered locus">LPC_3168</name>
</gene>
<sequence length="670" mass="75927">MTSERKMLVTSALPYANGHLHLGHLVEHIQTDIWVRTHKMLGIQCISVCGDDAHGTPIMLKAEQLGITPEALTAEIKLSHEKDFKAFAIDYDYYHTTHSPENQALATTIFERLQAGGDIVKKTIRQFYDPVKQMFLPDRYVKGTCPKCAAVDQYGDNCEVCGATYSPTDLINPVSVISGASPVEMESEHYFFDLPRYEELLKDWTRKGHLQTEVTNKLSEWFEAGLKQWDISRDAPYFGFPIPGVPDKYFYVWLDAPIGYMASFKKYCDERGVSFDEFWDKASKTELYHFVGKDIVYFHALFWPAMLAASGFRTPTAVYTHGFLTVEGQKMSKSRGTFIEARAYLAHLHPEYLRYYFAAKLNGRVDDLDLNFDDFVNRVNADLVGKVVNIASRCAGFINKRFDNRLSSELINQKLYNDLLSAREFVIDAFVSRDYARAIRQIMDCADKVNQYIDANKPWVLAKDESKLNEVHAICTMGINLFRILITYLKPVLPMMAKASEEFLNSEPLHWGSIDKPLLNHRINTFKPLMVRVEKEKIEAMLVQSKESLMTTPIKENTPVEDSNLISIEDFAKVDLRIAKIVNAEPVEGADKLMRLILDLGDAQKQVFAGIKKAYDAEELIGRLTVMVANLEPRTMRFGVSEGMVLAAGDGQGIYLLQPDAGAFPGMKVK</sequence>
<accession>A5II55</accession>
<feature type="chain" id="PRO_0000331844" description="Methionine--tRNA ligase">
    <location>
        <begin position="1"/>
        <end position="670"/>
    </location>
</feature>
<feature type="domain" description="tRNA-binding" evidence="1">
    <location>
        <begin position="570"/>
        <end position="670"/>
    </location>
</feature>
<feature type="short sequence motif" description="'HIGH' region">
    <location>
        <begin position="14"/>
        <end position="24"/>
    </location>
</feature>
<feature type="short sequence motif" description="'KMSKS' region">
    <location>
        <begin position="330"/>
        <end position="334"/>
    </location>
</feature>
<feature type="binding site" evidence="1">
    <location>
        <position position="145"/>
    </location>
    <ligand>
        <name>Zn(2+)</name>
        <dbReference type="ChEBI" id="CHEBI:29105"/>
    </ligand>
</feature>
<feature type="binding site" evidence="1">
    <location>
        <position position="148"/>
    </location>
    <ligand>
        <name>Zn(2+)</name>
        <dbReference type="ChEBI" id="CHEBI:29105"/>
    </ligand>
</feature>
<feature type="binding site" evidence="1">
    <location>
        <position position="158"/>
    </location>
    <ligand>
        <name>Zn(2+)</name>
        <dbReference type="ChEBI" id="CHEBI:29105"/>
    </ligand>
</feature>
<feature type="binding site" evidence="1">
    <location>
        <position position="161"/>
    </location>
    <ligand>
        <name>Zn(2+)</name>
        <dbReference type="ChEBI" id="CHEBI:29105"/>
    </ligand>
</feature>
<feature type="binding site" evidence="1">
    <location>
        <position position="333"/>
    </location>
    <ligand>
        <name>ATP</name>
        <dbReference type="ChEBI" id="CHEBI:30616"/>
    </ligand>
</feature>
<reference key="1">
    <citation type="submission" date="2006-11" db="EMBL/GenBank/DDBJ databases">
        <title>Identification and characterization of a new conjugation/ type IVA secretion system (trb/tra) of L. pneumophila Corby localized on a mobile genomic island.</title>
        <authorList>
            <person name="Gloeckner G."/>
            <person name="Albert-Weissenberger C."/>
            <person name="Weinmann E."/>
            <person name="Jacobi S."/>
            <person name="Schunder E."/>
            <person name="Steinert M."/>
            <person name="Buchrieser C."/>
            <person name="Hacker J."/>
            <person name="Heuner K."/>
        </authorList>
    </citation>
    <scope>NUCLEOTIDE SEQUENCE [LARGE SCALE GENOMIC DNA]</scope>
    <source>
        <strain>Corby</strain>
    </source>
</reference>
<comment type="function">
    <text evidence="1">Is required not only for elongation of protein synthesis but also for the initiation of all mRNA translation through initiator tRNA(fMet) aminoacylation.</text>
</comment>
<comment type="catalytic activity">
    <reaction evidence="1">
        <text>tRNA(Met) + L-methionine + ATP = L-methionyl-tRNA(Met) + AMP + diphosphate</text>
        <dbReference type="Rhea" id="RHEA:13481"/>
        <dbReference type="Rhea" id="RHEA-COMP:9667"/>
        <dbReference type="Rhea" id="RHEA-COMP:9698"/>
        <dbReference type="ChEBI" id="CHEBI:30616"/>
        <dbReference type="ChEBI" id="CHEBI:33019"/>
        <dbReference type="ChEBI" id="CHEBI:57844"/>
        <dbReference type="ChEBI" id="CHEBI:78442"/>
        <dbReference type="ChEBI" id="CHEBI:78530"/>
        <dbReference type="ChEBI" id="CHEBI:456215"/>
        <dbReference type="EC" id="6.1.1.10"/>
    </reaction>
</comment>
<comment type="cofactor">
    <cofactor evidence="1">
        <name>Zn(2+)</name>
        <dbReference type="ChEBI" id="CHEBI:29105"/>
    </cofactor>
    <text evidence="1">Binds 1 zinc ion per subunit.</text>
</comment>
<comment type="subunit">
    <text evidence="1">Homodimer.</text>
</comment>
<comment type="subcellular location">
    <subcellularLocation>
        <location evidence="1">Cytoplasm</location>
    </subcellularLocation>
</comment>
<comment type="similarity">
    <text evidence="1">Belongs to the class-I aminoacyl-tRNA synthetase family. MetG type 1 subfamily.</text>
</comment>
<dbReference type="EC" id="6.1.1.10" evidence="1"/>
<dbReference type="EMBL" id="CP000675">
    <property type="protein sequence ID" value="ABQ57055.1"/>
    <property type="molecule type" value="Genomic_DNA"/>
</dbReference>
<dbReference type="RefSeq" id="WP_011947761.1">
    <property type="nucleotide sequence ID" value="NC_009494.2"/>
</dbReference>
<dbReference type="SMR" id="A5II55"/>
<dbReference type="KEGG" id="lpc:LPC_3168"/>
<dbReference type="HOGENOM" id="CLU_009710_7_0_6"/>
<dbReference type="GO" id="GO:0005829">
    <property type="term" value="C:cytosol"/>
    <property type="evidence" value="ECO:0007669"/>
    <property type="project" value="TreeGrafter"/>
</dbReference>
<dbReference type="GO" id="GO:0005524">
    <property type="term" value="F:ATP binding"/>
    <property type="evidence" value="ECO:0007669"/>
    <property type="project" value="UniProtKB-UniRule"/>
</dbReference>
<dbReference type="GO" id="GO:0046872">
    <property type="term" value="F:metal ion binding"/>
    <property type="evidence" value="ECO:0007669"/>
    <property type="project" value="UniProtKB-KW"/>
</dbReference>
<dbReference type="GO" id="GO:0004825">
    <property type="term" value="F:methionine-tRNA ligase activity"/>
    <property type="evidence" value="ECO:0007669"/>
    <property type="project" value="UniProtKB-UniRule"/>
</dbReference>
<dbReference type="GO" id="GO:0000049">
    <property type="term" value="F:tRNA binding"/>
    <property type="evidence" value="ECO:0007669"/>
    <property type="project" value="UniProtKB-KW"/>
</dbReference>
<dbReference type="GO" id="GO:0006431">
    <property type="term" value="P:methionyl-tRNA aminoacylation"/>
    <property type="evidence" value="ECO:0007669"/>
    <property type="project" value="UniProtKB-UniRule"/>
</dbReference>
<dbReference type="CDD" id="cd07957">
    <property type="entry name" value="Anticodon_Ia_Met"/>
    <property type="match status" value="1"/>
</dbReference>
<dbReference type="CDD" id="cd00814">
    <property type="entry name" value="MetRS_core"/>
    <property type="match status" value="1"/>
</dbReference>
<dbReference type="CDD" id="cd02800">
    <property type="entry name" value="tRNA_bind_EcMetRS_like"/>
    <property type="match status" value="1"/>
</dbReference>
<dbReference type="FunFam" id="1.10.730.10:FF:000005">
    <property type="entry name" value="Methionine--tRNA ligase"/>
    <property type="match status" value="1"/>
</dbReference>
<dbReference type="FunFam" id="2.20.28.20:FF:000001">
    <property type="entry name" value="Methionine--tRNA ligase"/>
    <property type="match status" value="1"/>
</dbReference>
<dbReference type="FunFam" id="2.40.50.140:FF:000042">
    <property type="entry name" value="Methionine--tRNA ligase"/>
    <property type="match status" value="1"/>
</dbReference>
<dbReference type="Gene3D" id="3.40.50.620">
    <property type="entry name" value="HUPs"/>
    <property type="match status" value="1"/>
</dbReference>
<dbReference type="Gene3D" id="1.10.730.10">
    <property type="entry name" value="Isoleucyl-tRNA Synthetase, Domain 1"/>
    <property type="match status" value="1"/>
</dbReference>
<dbReference type="Gene3D" id="2.20.28.20">
    <property type="entry name" value="Methionyl-tRNA synthetase, Zn-domain"/>
    <property type="match status" value="1"/>
</dbReference>
<dbReference type="Gene3D" id="2.40.50.140">
    <property type="entry name" value="Nucleic acid-binding proteins"/>
    <property type="match status" value="1"/>
</dbReference>
<dbReference type="HAMAP" id="MF_00098">
    <property type="entry name" value="Met_tRNA_synth_type1"/>
    <property type="match status" value="1"/>
</dbReference>
<dbReference type="InterPro" id="IPR001412">
    <property type="entry name" value="aa-tRNA-synth_I_CS"/>
</dbReference>
<dbReference type="InterPro" id="IPR041872">
    <property type="entry name" value="Anticodon_Met"/>
</dbReference>
<dbReference type="InterPro" id="IPR004495">
    <property type="entry name" value="Met-tRNA-synth_bsu_C"/>
</dbReference>
<dbReference type="InterPro" id="IPR023458">
    <property type="entry name" value="Met-tRNA_ligase_1"/>
</dbReference>
<dbReference type="InterPro" id="IPR014758">
    <property type="entry name" value="Met-tRNA_synth"/>
</dbReference>
<dbReference type="InterPro" id="IPR015413">
    <property type="entry name" value="Methionyl/Leucyl_tRNA_Synth"/>
</dbReference>
<dbReference type="InterPro" id="IPR033911">
    <property type="entry name" value="MetRS_core"/>
</dbReference>
<dbReference type="InterPro" id="IPR029038">
    <property type="entry name" value="MetRS_Zn"/>
</dbReference>
<dbReference type="InterPro" id="IPR012340">
    <property type="entry name" value="NA-bd_OB-fold"/>
</dbReference>
<dbReference type="InterPro" id="IPR014729">
    <property type="entry name" value="Rossmann-like_a/b/a_fold"/>
</dbReference>
<dbReference type="InterPro" id="IPR002547">
    <property type="entry name" value="tRNA-bd_dom"/>
</dbReference>
<dbReference type="InterPro" id="IPR009080">
    <property type="entry name" value="tRNAsynth_Ia_anticodon-bd"/>
</dbReference>
<dbReference type="NCBIfam" id="TIGR00398">
    <property type="entry name" value="metG"/>
    <property type="match status" value="1"/>
</dbReference>
<dbReference type="NCBIfam" id="TIGR00399">
    <property type="entry name" value="metG_C_term"/>
    <property type="match status" value="1"/>
</dbReference>
<dbReference type="NCBIfam" id="NF001100">
    <property type="entry name" value="PRK00133.1"/>
    <property type="match status" value="1"/>
</dbReference>
<dbReference type="PANTHER" id="PTHR45765">
    <property type="entry name" value="METHIONINE--TRNA LIGASE"/>
    <property type="match status" value="1"/>
</dbReference>
<dbReference type="PANTHER" id="PTHR45765:SF1">
    <property type="entry name" value="METHIONINE--TRNA LIGASE, CYTOPLASMIC"/>
    <property type="match status" value="1"/>
</dbReference>
<dbReference type="Pfam" id="PF09334">
    <property type="entry name" value="tRNA-synt_1g"/>
    <property type="match status" value="1"/>
</dbReference>
<dbReference type="Pfam" id="PF01588">
    <property type="entry name" value="tRNA_bind"/>
    <property type="match status" value="1"/>
</dbReference>
<dbReference type="PRINTS" id="PR01041">
    <property type="entry name" value="TRNASYNTHMET"/>
</dbReference>
<dbReference type="SUPFAM" id="SSF47323">
    <property type="entry name" value="Anticodon-binding domain of a subclass of class I aminoacyl-tRNA synthetases"/>
    <property type="match status" value="1"/>
</dbReference>
<dbReference type="SUPFAM" id="SSF57770">
    <property type="entry name" value="Methionyl-tRNA synthetase (MetRS), Zn-domain"/>
    <property type="match status" value="1"/>
</dbReference>
<dbReference type="SUPFAM" id="SSF50249">
    <property type="entry name" value="Nucleic acid-binding proteins"/>
    <property type="match status" value="1"/>
</dbReference>
<dbReference type="SUPFAM" id="SSF52374">
    <property type="entry name" value="Nucleotidylyl transferase"/>
    <property type="match status" value="1"/>
</dbReference>
<dbReference type="PROSITE" id="PS00178">
    <property type="entry name" value="AA_TRNA_LIGASE_I"/>
    <property type="match status" value="1"/>
</dbReference>
<dbReference type="PROSITE" id="PS50886">
    <property type="entry name" value="TRBD"/>
    <property type="match status" value="1"/>
</dbReference>
<evidence type="ECO:0000255" key="1">
    <source>
        <dbReference type="HAMAP-Rule" id="MF_00098"/>
    </source>
</evidence>
<keyword id="KW-0030">Aminoacyl-tRNA synthetase</keyword>
<keyword id="KW-0067">ATP-binding</keyword>
<keyword id="KW-0963">Cytoplasm</keyword>
<keyword id="KW-0436">Ligase</keyword>
<keyword id="KW-0479">Metal-binding</keyword>
<keyword id="KW-0547">Nucleotide-binding</keyword>
<keyword id="KW-0648">Protein biosynthesis</keyword>
<keyword id="KW-0694">RNA-binding</keyword>
<keyword id="KW-0820">tRNA-binding</keyword>
<keyword id="KW-0862">Zinc</keyword>
<organism>
    <name type="scientific">Legionella pneumophila (strain Corby)</name>
    <dbReference type="NCBI Taxonomy" id="400673"/>
    <lineage>
        <taxon>Bacteria</taxon>
        <taxon>Pseudomonadati</taxon>
        <taxon>Pseudomonadota</taxon>
        <taxon>Gammaproteobacteria</taxon>
        <taxon>Legionellales</taxon>
        <taxon>Legionellaceae</taxon>
        <taxon>Legionella</taxon>
    </lineage>
</organism>
<name>SYM_LEGPC</name>